<feature type="chain" id="PRO_1000143245" description="Small ribosomal subunit protein uS17">
    <location>
        <begin position="1"/>
        <end position="92"/>
    </location>
</feature>
<protein>
    <recommendedName>
        <fullName evidence="1">Small ribosomal subunit protein uS17</fullName>
    </recommendedName>
    <alternativeName>
        <fullName evidence="2">30S ribosomal protein S17</fullName>
    </alternativeName>
</protein>
<dbReference type="EMBL" id="CU633749">
    <property type="protein sequence ID" value="CAQ70859.1"/>
    <property type="molecule type" value="Genomic_DNA"/>
</dbReference>
<dbReference type="RefSeq" id="WP_010812389.1">
    <property type="nucleotide sequence ID" value="NC_010528.1"/>
</dbReference>
<dbReference type="SMR" id="B3R7R4"/>
<dbReference type="GeneID" id="34309278"/>
<dbReference type="KEGG" id="cti:RALTA_A2934"/>
<dbReference type="eggNOG" id="COG0186">
    <property type="taxonomic scope" value="Bacteria"/>
</dbReference>
<dbReference type="HOGENOM" id="CLU_073626_1_1_4"/>
<dbReference type="BioCyc" id="CTAI977880:RALTA_RS14310-MONOMER"/>
<dbReference type="Proteomes" id="UP000001692">
    <property type="component" value="Chromosome 1"/>
</dbReference>
<dbReference type="GO" id="GO:0022627">
    <property type="term" value="C:cytosolic small ribosomal subunit"/>
    <property type="evidence" value="ECO:0007669"/>
    <property type="project" value="TreeGrafter"/>
</dbReference>
<dbReference type="GO" id="GO:0019843">
    <property type="term" value="F:rRNA binding"/>
    <property type="evidence" value="ECO:0007669"/>
    <property type="project" value="UniProtKB-UniRule"/>
</dbReference>
<dbReference type="GO" id="GO:0003735">
    <property type="term" value="F:structural constituent of ribosome"/>
    <property type="evidence" value="ECO:0007669"/>
    <property type="project" value="InterPro"/>
</dbReference>
<dbReference type="GO" id="GO:0006412">
    <property type="term" value="P:translation"/>
    <property type="evidence" value="ECO:0007669"/>
    <property type="project" value="UniProtKB-UniRule"/>
</dbReference>
<dbReference type="CDD" id="cd00364">
    <property type="entry name" value="Ribosomal_uS17"/>
    <property type="match status" value="1"/>
</dbReference>
<dbReference type="Gene3D" id="2.40.50.140">
    <property type="entry name" value="Nucleic acid-binding proteins"/>
    <property type="match status" value="1"/>
</dbReference>
<dbReference type="HAMAP" id="MF_01345_B">
    <property type="entry name" value="Ribosomal_uS17_B"/>
    <property type="match status" value="1"/>
</dbReference>
<dbReference type="InterPro" id="IPR012340">
    <property type="entry name" value="NA-bd_OB-fold"/>
</dbReference>
<dbReference type="InterPro" id="IPR000266">
    <property type="entry name" value="Ribosomal_uS17"/>
</dbReference>
<dbReference type="InterPro" id="IPR019984">
    <property type="entry name" value="Ribosomal_uS17_bact/chlr"/>
</dbReference>
<dbReference type="InterPro" id="IPR019979">
    <property type="entry name" value="Ribosomal_uS17_CS"/>
</dbReference>
<dbReference type="NCBIfam" id="NF004123">
    <property type="entry name" value="PRK05610.1"/>
    <property type="match status" value="1"/>
</dbReference>
<dbReference type="NCBIfam" id="TIGR03635">
    <property type="entry name" value="uS17_bact"/>
    <property type="match status" value="1"/>
</dbReference>
<dbReference type="PANTHER" id="PTHR10744">
    <property type="entry name" value="40S RIBOSOMAL PROTEIN S11 FAMILY MEMBER"/>
    <property type="match status" value="1"/>
</dbReference>
<dbReference type="PANTHER" id="PTHR10744:SF1">
    <property type="entry name" value="SMALL RIBOSOMAL SUBUNIT PROTEIN US17M"/>
    <property type="match status" value="1"/>
</dbReference>
<dbReference type="Pfam" id="PF00366">
    <property type="entry name" value="Ribosomal_S17"/>
    <property type="match status" value="1"/>
</dbReference>
<dbReference type="PRINTS" id="PR00973">
    <property type="entry name" value="RIBOSOMALS17"/>
</dbReference>
<dbReference type="SUPFAM" id="SSF50249">
    <property type="entry name" value="Nucleic acid-binding proteins"/>
    <property type="match status" value="1"/>
</dbReference>
<dbReference type="PROSITE" id="PS00056">
    <property type="entry name" value="RIBOSOMAL_S17"/>
    <property type="match status" value="1"/>
</dbReference>
<evidence type="ECO:0000255" key="1">
    <source>
        <dbReference type="HAMAP-Rule" id="MF_01345"/>
    </source>
</evidence>
<evidence type="ECO:0000305" key="2"/>
<sequence length="92" mass="10609">MTEAAQTEKSLRRTLVGRVVSDKMDKTVTVLVENRVKHPLYGKYVLRSKKYHAHDEANQYKEGDKVEIQEGRPLSRTKSWVVSRLVEAARVI</sequence>
<comment type="function">
    <text evidence="1">One of the primary rRNA binding proteins, it binds specifically to the 5'-end of 16S ribosomal RNA.</text>
</comment>
<comment type="subunit">
    <text evidence="1">Part of the 30S ribosomal subunit.</text>
</comment>
<comment type="similarity">
    <text evidence="1">Belongs to the universal ribosomal protein uS17 family.</text>
</comment>
<proteinExistence type="inferred from homology"/>
<organism>
    <name type="scientific">Cupriavidus taiwanensis (strain DSM 17343 / BCRC 17206 / CCUG 44338 / CIP 107171 / LMG 19424 / R1)</name>
    <name type="common">Ralstonia taiwanensis (strain LMG 19424)</name>
    <dbReference type="NCBI Taxonomy" id="977880"/>
    <lineage>
        <taxon>Bacteria</taxon>
        <taxon>Pseudomonadati</taxon>
        <taxon>Pseudomonadota</taxon>
        <taxon>Betaproteobacteria</taxon>
        <taxon>Burkholderiales</taxon>
        <taxon>Burkholderiaceae</taxon>
        <taxon>Cupriavidus</taxon>
    </lineage>
</organism>
<name>RS17_CUPTR</name>
<accession>B3R7R4</accession>
<keyword id="KW-0687">Ribonucleoprotein</keyword>
<keyword id="KW-0689">Ribosomal protein</keyword>
<keyword id="KW-0694">RNA-binding</keyword>
<keyword id="KW-0699">rRNA-binding</keyword>
<gene>
    <name evidence="1" type="primary">rpsQ</name>
    <name type="ordered locus">RALTA_A2934</name>
</gene>
<reference key="1">
    <citation type="journal article" date="2008" name="Genome Res.">
        <title>Genome sequence of the beta-rhizobium Cupriavidus taiwanensis and comparative genomics of rhizobia.</title>
        <authorList>
            <person name="Amadou C."/>
            <person name="Pascal G."/>
            <person name="Mangenot S."/>
            <person name="Glew M."/>
            <person name="Bontemps C."/>
            <person name="Capela D."/>
            <person name="Carrere S."/>
            <person name="Cruveiller S."/>
            <person name="Dossat C."/>
            <person name="Lajus A."/>
            <person name="Marchetti M."/>
            <person name="Poinsot V."/>
            <person name="Rouy Z."/>
            <person name="Servin B."/>
            <person name="Saad M."/>
            <person name="Schenowitz C."/>
            <person name="Barbe V."/>
            <person name="Batut J."/>
            <person name="Medigue C."/>
            <person name="Masson-Boivin C."/>
        </authorList>
    </citation>
    <scope>NUCLEOTIDE SEQUENCE [LARGE SCALE GENOMIC DNA]</scope>
    <source>
        <strain>DSM 17343 / BCRC 17206 / CCUG 44338 / CIP 107171 / LMG 19424 / R1</strain>
    </source>
</reference>